<accession>A1AEU1</accession>
<organism>
    <name type="scientific">Escherichia coli O1:K1 / APEC</name>
    <dbReference type="NCBI Taxonomy" id="405955"/>
    <lineage>
        <taxon>Bacteria</taxon>
        <taxon>Pseudomonadati</taxon>
        <taxon>Pseudomonadota</taxon>
        <taxon>Gammaproteobacteria</taxon>
        <taxon>Enterobacterales</taxon>
        <taxon>Enterobacteriaceae</taxon>
        <taxon>Escherichia</taxon>
    </lineage>
</organism>
<evidence type="ECO:0000255" key="1">
    <source>
        <dbReference type="HAMAP-Rule" id="MF_00108"/>
    </source>
</evidence>
<proteinExistence type="inferred from homology"/>
<protein>
    <recommendedName>
        <fullName evidence="1">2-C-methyl-D-erythritol 4-phosphate cytidylyltransferase</fullName>
        <ecNumber evidence="1">2.7.7.60</ecNumber>
    </recommendedName>
    <alternativeName>
        <fullName evidence="1">4-diphosphocytidyl-2C-methyl-D-erythritol synthase</fullName>
    </alternativeName>
    <alternativeName>
        <fullName evidence="1">MEP cytidylyltransferase</fullName>
        <shortName evidence="1">MCT</shortName>
    </alternativeName>
</protein>
<comment type="function">
    <text evidence="1">Catalyzes the formation of 4-diphosphocytidyl-2-C-methyl-D-erythritol from CTP and 2-C-methyl-D-erythritol 4-phosphate (MEP).</text>
</comment>
<comment type="catalytic activity">
    <reaction evidence="1">
        <text>2-C-methyl-D-erythritol 4-phosphate + CTP + H(+) = 4-CDP-2-C-methyl-D-erythritol + diphosphate</text>
        <dbReference type="Rhea" id="RHEA:13429"/>
        <dbReference type="ChEBI" id="CHEBI:15378"/>
        <dbReference type="ChEBI" id="CHEBI:33019"/>
        <dbReference type="ChEBI" id="CHEBI:37563"/>
        <dbReference type="ChEBI" id="CHEBI:57823"/>
        <dbReference type="ChEBI" id="CHEBI:58262"/>
        <dbReference type="EC" id="2.7.7.60"/>
    </reaction>
</comment>
<comment type="pathway">
    <text evidence="1">Isoprenoid biosynthesis; isopentenyl diphosphate biosynthesis via DXP pathway; isopentenyl diphosphate from 1-deoxy-D-xylulose 5-phosphate: step 2/6.</text>
</comment>
<comment type="subunit">
    <text evidence="1">Homodimer.</text>
</comment>
<comment type="similarity">
    <text evidence="1">Belongs to the IspD/TarI cytidylyltransferase family. IspD subfamily.</text>
</comment>
<sequence>MATTHLDVCAVVPAAGFGRRMQTECPKQYLSIGNQTILEHSVHALLAHPRVKRVVIAISPGDSRFAQLPLANHPRITVVDGGEERADSVLAGLKAAGDAQWVLVHDAARPCLHQDDLARLLALSETSRTGGILAAPVRDTMKRAEPGKNAIAHTVDRNGLWHALTPQFFPRELLHDCLTRALNEGATITDEASALEYCGFHPQLVEGRADNIKVTRPEDLALAEFYLTRTIHQENT</sequence>
<reference key="1">
    <citation type="journal article" date="2007" name="J. Bacteriol.">
        <title>The genome sequence of avian pathogenic Escherichia coli strain O1:K1:H7 shares strong similarities with human extraintestinal pathogenic E. coli genomes.</title>
        <authorList>
            <person name="Johnson T.J."/>
            <person name="Kariyawasam S."/>
            <person name="Wannemuehler Y."/>
            <person name="Mangiamele P."/>
            <person name="Johnson S.J."/>
            <person name="Doetkott C."/>
            <person name="Skyberg J.A."/>
            <person name="Lynne A.M."/>
            <person name="Johnson J.R."/>
            <person name="Nolan L.K."/>
        </authorList>
    </citation>
    <scope>NUCLEOTIDE SEQUENCE [LARGE SCALE GENOMIC DNA]</scope>
</reference>
<gene>
    <name evidence="1" type="primary">ispD</name>
    <name type="ordered locus">Ecok1_26870</name>
    <name type="ORF">APECO1_3776</name>
</gene>
<dbReference type="EC" id="2.7.7.60" evidence="1"/>
<dbReference type="EMBL" id="CP000468">
    <property type="protein sequence ID" value="ABJ02181.1"/>
    <property type="molecule type" value="Genomic_DNA"/>
</dbReference>
<dbReference type="RefSeq" id="WP_000246149.1">
    <property type="nucleotide sequence ID" value="NZ_CADILS010000024.1"/>
</dbReference>
<dbReference type="SMR" id="A1AEU1"/>
<dbReference type="KEGG" id="ecv:APECO1_3776"/>
<dbReference type="HOGENOM" id="CLU_061281_3_1_6"/>
<dbReference type="UniPathway" id="UPA00056">
    <property type="reaction ID" value="UER00093"/>
</dbReference>
<dbReference type="Proteomes" id="UP000008216">
    <property type="component" value="Chromosome"/>
</dbReference>
<dbReference type="GO" id="GO:0050518">
    <property type="term" value="F:2-C-methyl-D-erythritol 4-phosphate cytidylyltransferase activity"/>
    <property type="evidence" value="ECO:0007669"/>
    <property type="project" value="UniProtKB-UniRule"/>
</dbReference>
<dbReference type="GO" id="GO:0019288">
    <property type="term" value="P:isopentenyl diphosphate biosynthetic process, methylerythritol 4-phosphate pathway"/>
    <property type="evidence" value="ECO:0007669"/>
    <property type="project" value="UniProtKB-UniRule"/>
</dbReference>
<dbReference type="CDD" id="cd02516">
    <property type="entry name" value="CDP-ME_synthetase"/>
    <property type="match status" value="1"/>
</dbReference>
<dbReference type="FunFam" id="3.90.550.10:FF:000003">
    <property type="entry name" value="2-C-methyl-D-erythritol 4-phosphate cytidylyltransferase"/>
    <property type="match status" value="1"/>
</dbReference>
<dbReference type="Gene3D" id="3.90.550.10">
    <property type="entry name" value="Spore Coat Polysaccharide Biosynthesis Protein SpsA, Chain A"/>
    <property type="match status" value="1"/>
</dbReference>
<dbReference type="HAMAP" id="MF_00108">
    <property type="entry name" value="IspD"/>
    <property type="match status" value="1"/>
</dbReference>
<dbReference type="InterPro" id="IPR001228">
    <property type="entry name" value="IspD"/>
</dbReference>
<dbReference type="InterPro" id="IPR034683">
    <property type="entry name" value="IspD/TarI"/>
</dbReference>
<dbReference type="InterPro" id="IPR050088">
    <property type="entry name" value="IspD/TarI_cytidylyltransf_bact"/>
</dbReference>
<dbReference type="InterPro" id="IPR018294">
    <property type="entry name" value="ISPD_synthase_CS"/>
</dbReference>
<dbReference type="InterPro" id="IPR029044">
    <property type="entry name" value="Nucleotide-diphossugar_trans"/>
</dbReference>
<dbReference type="NCBIfam" id="TIGR00453">
    <property type="entry name" value="ispD"/>
    <property type="match status" value="1"/>
</dbReference>
<dbReference type="PANTHER" id="PTHR32125">
    <property type="entry name" value="2-C-METHYL-D-ERYTHRITOL 4-PHOSPHATE CYTIDYLYLTRANSFERASE, CHLOROPLASTIC"/>
    <property type="match status" value="1"/>
</dbReference>
<dbReference type="PANTHER" id="PTHR32125:SF4">
    <property type="entry name" value="2-C-METHYL-D-ERYTHRITOL 4-PHOSPHATE CYTIDYLYLTRANSFERASE, CHLOROPLASTIC"/>
    <property type="match status" value="1"/>
</dbReference>
<dbReference type="Pfam" id="PF01128">
    <property type="entry name" value="IspD"/>
    <property type="match status" value="1"/>
</dbReference>
<dbReference type="SUPFAM" id="SSF53448">
    <property type="entry name" value="Nucleotide-diphospho-sugar transferases"/>
    <property type="match status" value="1"/>
</dbReference>
<dbReference type="PROSITE" id="PS01295">
    <property type="entry name" value="ISPD"/>
    <property type="match status" value="1"/>
</dbReference>
<keyword id="KW-0414">Isoprene biosynthesis</keyword>
<keyword id="KW-0548">Nucleotidyltransferase</keyword>
<keyword id="KW-1185">Reference proteome</keyword>
<keyword id="KW-0808">Transferase</keyword>
<feature type="chain" id="PRO_1000022922" description="2-C-methyl-D-erythritol 4-phosphate cytidylyltransferase">
    <location>
        <begin position="1"/>
        <end position="236"/>
    </location>
</feature>
<feature type="site" description="Transition state stabilizer" evidence="1">
    <location>
        <position position="20"/>
    </location>
</feature>
<feature type="site" description="Transition state stabilizer" evidence="1">
    <location>
        <position position="27"/>
    </location>
</feature>
<feature type="site" description="Positions MEP for the nucleophilic attack" evidence="1">
    <location>
        <position position="157"/>
    </location>
</feature>
<feature type="site" description="Positions MEP for the nucleophilic attack" evidence="1">
    <location>
        <position position="213"/>
    </location>
</feature>
<name>ISPD_ECOK1</name>